<sequence>MARYIFITGGVVSSLGKGLASAALGALLQARGYKVRLRKLDPYLNLDPGTMSPYQHGEVFVTDDGAETDLDLGHYERFTGRPATKQDNITTGRIYQDILTKERRGDYLGATIQVIPHVTNAIKEFVLSGNDGYDFVLVEIGGTVGDIEGLPFFEAIRQIRNDLPRGDVIYIHLTLLPYIPSAGELKTKPTQHSVKELRSIGIQPDILLCRTDRPIPKEERRKLGLFCNVRETAVIEARDADSIYAVPEAYHAAGLDDEVLAAFAIAAEEPPALERWHKINERIRNPEGAVTIAIVGKYTGMKDAYKSLIEALSHGGIANKVEVKLDWIESEVFENEDPAPFLEHVNGILVPGGFGQRGAEGKIEAARFARERDVPYFGICFGMQMAVIEAARNLAGIAEANSTEFGPTSEPLVGLMTEWLRGNELERRSQAGDLGGTMRLGAYPAALKRGSRVSKVYGDVLEISERHRHRYEVNTAYKDRLEQHGLRFSGMSPDGVLPEIVEYEDHPWFIGVQFHPELKSRPFEPHPLFSSFIEAALVRSRLV</sequence>
<organism>
    <name type="scientific">Rhodopseudomonas palustris (strain BisB5)</name>
    <dbReference type="NCBI Taxonomy" id="316057"/>
    <lineage>
        <taxon>Bacteria</taxon>
        <taxon>Pseudomonadati</taxon>
        <taxon>Pseudomonadota</taxon>
        <taxon>Alphaproteobacteria</taxon>
        <taxon>Hyphomicrobiales</taxon>
        <taxon>Nitrobacteraceae</taxon>
        <taxon>Rhodopseudomonas</taxon>
    </lineage>
</organism>
<evidence type="ECO:0000255" key="1">
    <source>
        <dbReference type="HAMAP-Rule" id="MF_01227"/>
    </source>
</evidence>
<comment type="function">
    <text evidence="1">Catalyzes the ATP-dependent amination of UTP to CTP with either L-glutamine or ammonia as the source of nitrogen. Regulates intracellular CTP levels through interactions with the four ribonucleotide triphosphates.</text>
</comment>
<comment type="catalytic activity">
    <reaction evidence="1">
        <text>UTP + L-glutamine + ATP + H2O = CTP + L-glutamate + ADP + phosphate + 2 H(+)</text>
        <dbReference type="Rhea" id="RHEA:26426"/>
        <dbReference type="ChEBI" id="CHEBI:15377"/>
        <dbReference type="ChEBI" id="CHEBI:15378"/>
        <dbReference type="ChEBI" id="CHEBI:29985"/>
        <dbReference type="ChEBI" id="CHEBI:30616"/>
        <dbReference type="ChEBI" id="CHEBI:37563"/>
        <dbReference type="ChEBI" id="CHEBI:43474"/>
        <dbReference type="ChEBI" id="CHEBI:46398"/>
        <dbReference type="ChEBI" id="CHEBI:58359"/>
        <dbReference type="ChEBI" id="CHEBI:456216"/>
        <dbReference type="EC" id="6.3.4.2"/>
    </reaction>
</comment>
<comment type="catalytic activity">
    <reaction evidence="1">
        <text>L-glutamine + H2O = L-glutamate + NH4(+)</text>
        <dbReference type="Rhea" id="RHEA:15889"/>
        <dbReference type="ChEBI" id="CHEBI:15377"/>
        <dbReference type="ChEBI" id="CHEBI:28938"/>
        <dbReference type="ChEBI" id="CHEBI:29985"/>
        <dbReference type="ChEBI" id="CHEBI:58359"/>
    </reaction>
</comment>
<comment type="catalytic activity">
    <reaction evidence="1">
        <text>UTP + NH4(+) + ATP = CTP + ADP + phosphate + 2 H(+)</text>
        <dbReference type="Rhea" id="RHEA:16597"/>
        <dbReference type="ChEBI" id="CHEBI:15378"/>
        <dbReference type="ChEBI" id="CHEBI:28938"/>
        <dbReference type="ChEBI" id="CHEBI:30616"/>
        <dbReference type="ChEBI" id="CHEBI:37563"/>
        <dbReference type="ChEBI" id="CHEBI:43474"/>
        <dbReference type="ChEBI" id="CHEBI:46398"/>
        <dbReference type="ChEBI" id="CHEBI:456216"/>
    </reaction>
</comment>
<comment type="activity regulation">
    <text evidence="1">Allosterically activated by GTP, when glutamine is the substrate; GTP has no effect on the reaction when ammonia is the substrate. The allosteric effector GTP functions by stabilizing the protein conformation that binds the tetrahedral intermediate(s) formed during glutamine hydrolysis. Inhibited by the product CTP, via allosteric rather than competitive inhibition.</text>
</comment>
<comment type="pathway">
    <text evidence="1">Pyrimidine metabolism; CTP biosynthesis via de novo pathway; CTP from UDP: step 2/2.</text>
</comment>
<comment type="subunit">
    <text evidence="1">Homotetramer.</text>
</comment>
<comment type="miscellaneous">
    <text evidence="1">CTPSs have evolved a hybrid strategy for distinguishing between UTP and CTP. The overlapping regions of the product feedback inhibitory and substrate sites recognize a common feature in both compounds, the triphosphate moiety. To differentiate isosteric substrate and product pyrimidine rings, an additional pocket far from the expected kinase/ligase catalytic site, specifically recognizes the cytosine and ribose portions of the product inhibitor.</text>
</comment>
<comment type="similarity">
    <text evidence="1">Belongs to the CTP synthase family.</text>
</comment>
<keyword id="KW-0067">ATP-binding</keyword>
<keyword id="KW-0315">Glutamine amidotransferase</keyword>
<keyword id="KW-0436">Ligase</keyword>
<keyword id="KW-0460">Magnesium</keyword>
<keyword id="KW-0479">Metal-binding</keyword>
<keyword id="KW-0547">Nucleotide-binding</keyword>
<keyword id="KW-0665">Pyrimidine biosynthesis</keyword>
<dbReference type="EC" id="6.3.4.2" evidence="1"/>
<dbReference type="EMBL" id="CP000283">
    <property type="protein sequence ID" value="ABE40052.1"/>
    <property type="molecule type" value="Genomic_DNA"/>
</dbReference>
<dbReference type="SMR" id="Q136D7"/>
<dbReference type="STRING" id="316057.RPD_2824"/>
<dbReference type="MEROPS" id="C26.964"/>
<dbReference type="KEGG" id="rpd:RPD_2824"/>
<dbReference type="eggNOG" id="COG0504">
    <property type="taxonomic scope" value="Bacteria"/>
</dbReference>
<dbReference type="HOGENOM" id="CLU_011675_5_0_5"/>
<dbReference type="BioCyc" id="RPAL316057:RPD_RS14185-MONOMER"/>
<dbReference type="UniPathway" id="UPA00159">
    <property type="reaction ID" value="UER00277"/>
</dbReference>
<dbReference type="Proteomes" id="UP000001818">
    <property type="component" value="Chromosome"/>
</dbReference>
<dbReference type="GO" id="GO:0005829">
    <property type="term" value="C:cytosol"/>
    <property type="evidence" value="ECO:0007669"/>
    <property type="project" value="TreeGrafter"/>
</dbReference>
<dbReference type="GO" id="GO:0005524">
    <property type="term" value="F:ATP binding"/>
    <property type="evidence" value="ECO:0007669"/>
    <property type="project" value="UniProtKB-KW"/>
</dbReference>
<dbReference type="GO" id="GO:0003883">
    <property type="term" value="F:CTP synthase activity"/>
    <property type="evidence" value="ECO:0007669"/>
    <property type="project" value="UniProtKB-UniRule"/>
</dbReference>
<dbReference type="GO" id="GO:0004359">
    <property type="term" value="F:glutaminase activity"/>
    <property type="evidence" value="ECO:0007669"/>
    <property type="project" value="RHEA"/>
</dbReference>
<dbReference type="GO" id="GO:0042802">
    <property type="term" value="F:identical protein binding"/>
    <property type="evidence" value="ECO:0007669"/>
    <property type="project" value="TreeGrafter"/>
</dbReference>
<dbReference type="GO" id="GO:0046872">
    <property type="term" value="F:metal ion binding"/>
    <property type="evidence" value="ECO:0007669"/>
    <property type="project" value="UniProtKB-KW"/>
</dbReference>
<dbReference type="GO" id="GO:0044210">
    <property type="term" value="P:'de novo' CTP biosynthetic process"/>
    <property type="evidence" value="ECO:0007669"/>
    <property type="project" value="UniProtKB-UniRule"/>
</dbReference>
<dbReference type="GO" id="GO:0019856">
    <property type="term" value="P:pyrimidine nucleobase biosynthetic process"/>
    <property type="evidence" value="ECO:0007669"/>
    <property type="project" value="TreeGrafter"/>
</dbReference>
<dbReference type="CDD" id="cd03113">
    <property type="entry name" value="CTPS_N"/>
    <property type="match status" value="1"/>
</dbReference>
<dbReference type="CDD" id="cd01746">
    <property type="entry name" value="GATase1_CTP_Synthase"/>
    <property type="match status" value="1"/>
</dbReference>
<dbReference type="FunFam" id="3.40.50.300:FF:000009">
    <property type="entry name" value="CTP synthase"/>
    <property type="match status" value="1"/>
</dbReference>
<dbReference type="FunFam" id="3.40.50.880:FF:000002">
    <property type="entry name" value="CTP synthase"/>
    <property type="match status" value="1"/>
</dbReference>
<dbReference type="Gene3D" id="3.40.50.880">
    <property type="match status" value="1"/>
</dbReference>
<dbReference type="Gene3D" id="3.40.50.300">
    <property type="entry name" value="P-loop containing nucleotide triphosphate hydrolases"/>
    <property type="match status" value="1"/>
</dbReference>
<dbReference type="HAMAP" id="MF_01227">
    <property type="entry name" value="PyrG"/>
    <property type="match status" value="1"/>
</dbReference>
<dbReference type="InterPro" id="IPR029062">
    <property type="entry name" value="Class_I_gatase-like"/>
</dbReference>
<dbReference type="InterPro" id="IPR004468">
    <property type="entry name" value="CTP_synthase"/>
</dbReference>
<dbReference type="InterPro" id="IPR017456">
    <property type="entry name" value="CTP_synthase_N"/>
</dbReference>
<dbReference type="InterPro" id="IPR017926">
    <property type="entry name" value="GATASE"/>
</dbReference>
<dbReference type="InterPro" id="IPR033828">
    <property type="entry name" value="GATase1_CTP_Synthase"/>
</dbReference>
<dbReference type="InterPro" id="IPR027417">
    <property type="entry name" value="P-loop_NTPase"/>
</dbReference>
<dbReference type="NCBIfam" id="NF003792">
    <property type="entry name" value="PRK05380.1"/>
    <property type="match status" value="1"/>
</dbReference>
<dbReference type="NCBIfam" id="TIGR00337">
    <property type="entry name" value="PyrG"/>
    <property type="match status" value="1"/>
</dbReference>
<dbReference type="PANTHER" id="PTHR11550">
    <property type="entry name" value="CTP SYNTHASE"/>
    <property type="match status" value="1"/>
</dbReference>
<dbReference type="PANTHER" id="PTHR11550:SF0">
    <property type="entry name" value="CTP SYNTHASE-RELATED"/>
    <property type="match status" value="1"/>
</dbReference>
<dbReference type="Pfam" id="PF06418">
    <property type="entry name" value="CTP_synth_N"/>
    <property type="match status" value="1"/>
</dbReference>
<dbReference type="Pfam" id="PF00117">
    <property type="entry name" value="GATase"/>
    <property type="match status" value="1"/>
</dbReference>
<dbReference type="SUPFAM" id="SSF52317">
    <property type="entry name" value="Class I glutamine amidotransferase-like"/>
    <property type="match status" value="1"/>
</dbReference>
<dbReference type="SUPFAM" id="SSF52540">
    <property type="entry name" value="P-loop containing nucleoside triphosphate hydrolases"/>
    <property type="match status" value="1"/>
</dbReference>
<dbReference type="PROSITE" id="PS51273">
    <property type="entry name" value="GATASE_TYPE_1"/>
    <property type="match status" value="1"/>
</dbReference>
<name>PYRG_RHOPS</name>
<gene>
    <name evidence="1" type="primary">pyrG</name>
    <name type="ordered locus">RPD_2824</name>
</gene>
<protein>
    <recommendedName>
        <fullName evidence="1">CTP synthase</fullName>
        <ecNumber evidence="1">6.3.4.2</ecNumber>
    </recommendedName>
    <alternativeName>
        <fullName evidence="1">Cytidine 5'-triphosphate synthase</fullName>
    </alternativeName>
    <alternativeName>
        <fullName evidence="1">Cytidine triphosphate synthetase</fullName>
        <shortName evidence="1">CTP synthetase</shortName>
        <shortName evidence="1">CTPS</shortName>
    </alternativeName>
    <alternativeName>
        <fullName evidence="1">UTP--ammonia ligase</fullName>
    </alternativeName>
</protein>
<feature type="chain" id="PRO_0000266200" description="CTP synthase">
    <location>
        <begin position="1"/>
        <end position="543"/>
    </location>
</feature>
<feature type="domain" description="Glutamine amidotransferase type-1" evidence="1">
    <location>
        <begin position="291"/>
        <end position="542"/>
    </location>
</feature>
<feature type="region of interest" description="Amidoligase domain" evidence="1">
    <location>
        <begin position="1"/>
        <end position="265"/>
    </location>
</feature>
<feature type="active site" description="Nucleophile; for glutamine hydrolysis" evidence="1">
    <location>
        <position position="380"/>
    </location>
</feature>
<feature type="active site" evidence="1">
    <location>
        <position position="515"/>
    </location>
</feature>
<feature type="active site" evidence="1">
    <location>
        <position position="517"/>
    </location>
</feature>
<feature type="binding site" evidence="1">
    <location>
        <position position="13"/>
    </location>
    <ligand>
        <name>CTP</name>
        <dbReference type="ChEBI" id="CHEBI:37563"/>
        <note>allosteric inhibitor</note>
    </ligand>
</feature>
<feature type="binding site" evidence="1">
    <location>
        <position position="13"/>
    </location>
    <ligand>
        <name>UTP</name>
        <dbReference type="ChEBI" id="CHEBI:46398"/>
    </ligand>
</feature>
<feature type="binding site" evidence="1">
    <location>
        <begin position="14"/>
        <end position="19"/>
    </location>
    <ligand>
        <name>ATP</name>
        <dbReference type="ChEBI" id="CHEBI:30616"/>
    </ligand>
</feature>
<feature type="binding site" evidence="1">
    <location>
        <position position="54"/>
    </location>
    <ligand>
        <name>L-glutamine</name>
        <dbReference type="ChEBI" id="CHEBI:58359"/>
    </ligand>
</feature>
<feature type="binding site" evidence="1">
    <location>
        <position position="71"/>
    </location>
    <ligand>
        <name>ATP</name>
        <dbReference type="ChEBI" id="CHEBI:30616"/>
    </ligand>
</feature>
<feature type="binding site" evidence="1">
    <location>
        <position position="71"/>
    </location>
    <ligand>
        <name>Mg(2+)</name>
        <dbReference type="ChEBI" id="CHEBI:18420"/>
    </ligand>
</feature>
<feature type="binding site" evidence="1">
    <location>
        <position position="139"/>
    </location>
    <ligand>
        <name>Mg(2+)</name>
        <dbReference type="ChEBI" id="CHEBI:18420"/>
    </ligand>
</feature>
<feature type="binding site" evidence="1">
    <location>
        <begin position="146"/>
        <end position="148"/>
    </location>
    <ligand>
        <name>CTP</name>
        <dbReference type="ChEBI" id="CHEBI:37563"/>
        <note>allosteric inhibitor</note>
    </ligand>
</feature>
<feature type="binding site" evidence="1">
    <location>
        <begin position="186"/>
        <end position="191"/>
    </location>
    <ligand>
        <name>CTP</name>
        <dbReference type="ChEBI" id="CHEBI:37563"/>
        <note>allosteric inhibitor</note>
    </ligand>
</feature>
<feature type="binding site" evidence="1">
    <location>
        <begin position="186"/>
        <end position="191"/>
    </location>
    <ligand>
        <name>UTP</name>
        <dbReference type="ChEBI" id="CHEBI:46398"/>
    </ligand>
</feature>
<feature type="binding site" evidence="1">
    <location>
        <position position="222"/>
    </location>
    <ligand>
        <name>CTP</name>
        <dbReference type="ChEBI" id="CHEBI:37563"/>
        <note>allosteric inhibitor</note>
    </ligand>
</feature>
<feature type="binding site" evidence="1">
    <location>
        <position position="222"/>
    </location>
    <ligand>
        <name>UTP</name>
        <dbReference type="ChEBI" id="CHEBI:46398"/>
    </ligand>
</feature>
<feature type="binding site" evidence="1">
    <location>
        <begin position="238"/>
        <end position="240"/>
    </location>
    <ligand>
        <name>ATP</name>
        <dbReference type="ChEBI" id="CHEBI:30616"/>
    </ligand>
</feature>
<feature type="binding site" evidence="1">
    <location>
        <position position="353"/>
    </location>
    <ligand>
        <name>L-glutamine</name>
        <dbReference type="ChEBI" id="CHEBI:58359"/>
    </ligand>
</feature>
<feature type="binding site" evidence="1">
    <location>
        <begin position="381"/>
        <end position="384"/>
    </location>
    <ligand>
        <name>L-glutamine</name>
        <dbReference type="ChEBI" id="CHEBI:58359"/>
    </ligand>
</feature>
<feature type="binding site" evidence="1">
    <location>
        <position position="404"/>
    </location>
    <ligand>
        <name>L-glutamine</name>
        <dbReference type="ChEBI" id="CHEBI:58359"/>
    </ligand>
</feature>
<feature type="binding site" evidence="1">
    <location>
        <position position="470"/>
    </location>
    <ligand>
        <name>L-glutamine</name>
        <dbReference type="ChEBI" id="CHEBI:58359"/>
    </ligand>
</feature>
<proteinExistence type="inferred from homology"/>
<reference key="1">
    <citation type="submission" date="2006-03" db="EMBL/GenBank/DDBJ databases">
        <title>Complete sequence of Rhodopseudomonas palustris BisB5.</title>
        <authorList>
            <consortium name="US DOE Joint Genome Institute"/>
            <person name="Copeland A."/>
            <person name="Lucas S."/>
            <person name="Lapidus A."/>
            <person name="Barry K."/>
            <person name="Detter J.C."/>
            <person name="Glavina del Rio T."/>
            <person name="Hammon N."/>
            <person name="Israni S."/>
            <person name="Dalin E."/>
            <person name="Tice H."/>
            <person name="Pitluck S."/>
            <person name="Chain P."/>
            <person name="Malfatti S."/>
            <person name="Shin M."/>
            <person name="Vergez L."/>
            <person name="Schmutz J."/>
            <person name="Larimer F."/>
            <person name="Land M."/>
            <person name="Hauser L."/>
            <person name="Pelletier D.A."/>
            <person name="Kyrpides N."/>
            <person name="Lykidis A."/>
            <person name="Oda Y."/>
            <person name="Harwood C.S."/>
            <person name="Richardson P."/>
        </authorList>
    </citation>
    <scope>NUCLEOTIDE SEQUENCE [LARGE SCALE GENOMIC DNA]</scope>
    <source>
        <strain>BisB5</strain>
    </source>
</reference>
<accession>Q136D7</accession>